<evidence type="ECO:0000255" key="1">
    <source>
        <dbReference type="HAMAP-Rule" id="MF_00139"/>
    </source>
</evidence>
<evidence type="ECO:0000255" key="2">
    <source>
        <dbReference type="PROSITE-ProRule" id="PRU01202"/>
    </source>
</evidence>
<dbReference type="EC" id="2.1.2.3" evidence="1"/>
<dbReference type="EC" id="3.5.4.10" evidence="1"/>
<dbReference type="EMBL" id="CP001407">
    <property type="protein sequence ID" value="ACO30819.1"/>
    <property type="molecule type" value="Genomic_DNA"/>
</dbReference>
<dbReference type="RefSeq" id="WP_000745421.1">
    <property type="nucleotide sequence ID" value="NC_012472.1"/>
</dbReference>
<dbReference type="SMR" id="C1EV67"/>
<dbReference type="KEGG" id="bcx:BCA_0372"/>
<dbReference type="PATRIC" id="fig|572264.18.peg.361"/>
<dbReference type="UniPathway" id="UPA00074">
    <property type="reaction ID" value="UER00133"/>
</dbReference>
<dbReference type="UniPathway" id="UPA00074">
    <property type="reaction ID" value="UER00135"/>
</dbReference>
<dbReference type="Proteomes" id="UP000002210">
    <property type="component" value="Chromosome"/>
</dbReference>
<dbReference type="GO" id="GO:0005829">
    <property type="term" value="C:cytosol"/>
    <property type="evidence" value="ECO:0007669"/>
    <property type="project" value="TreeGrafter"/>
</dbReference>
<dbReference type="GO" id="GO:0003937">
    <property type="term" value="F:IMP cyclohydrolase activity"/>
    <property type="evidence" value="ECO:0007669"/>
    <property type="project" value="UniProtKB-UniRule"/>
</dbReference>
<dbReference type="GO" id="GO:0004643">
    <property type="term" value="F:phosphoribosylaminoimidazolecarboxamide formyltransferase activity"/>
    <property type="evidence" value="ECO:0007669"/>
    <property type="project" value="UniProtKB-UniRule"/>
</dbReference>
<dbReference type="GO" id="GO:0006189">
    <property type="term" value="P:'de novo' IMP biosynthetic process"/>
    <property type="evidence" value="ECO:0007669"/>
    <property type="project" value="UniProtKB-UniRule"/>
</dbReference>
<dbReference type="CDD" id="cd01421">
    <property type="entry name" value="IMPCH"/>
    <property type="match status" value="1"/>
</dbReference>
<dbReference type="FunFam" id="3.40.140.20:FF:000001">
    <property type="entry name" value="Bifunctional purine biosynthesis protein PurH"/>
    <property type="match status" value="1"/>
</dbReference>
<dbReference type="FunFam" id="3.40.140.20:FF:000002">
    <property type="entry name" value="Bifunctional purine biosynthesis protein PurH"/>
    <property type="match status" value="1"/>
</dbReference>
<dbReference type="FunFam" id="3.40.50.1380:FF:000001">
    <property type="entry name" value="Bifunctional purine biosynthesis protein PurH"/>
    <property type="match status" value="1"/>
</dbReference>
<dbReference type="Gene3D" id="3.40.140.20">
    <property type="match status" value="2"/>
</dbReference>
<dbReference type="Gene3D" id="3.40.50.1380">
    <property type="entry name" value="Methylglyoxal synthase-like domain"/>
    <property type="match status" value="1"/>
</dbReference>
<dbReference type="HAMAP" id="MF_00139">
    <property type="entry name" value="PurH"/>
    <property type="match status" value="1"/>
</dbReference>
<dbReference type="InterPro" id="IPR024051">
    <property type="entry name" value="AICAR_Tfase_dup_dom_sf"/>
</dbReference>
<dbReference type="InterPro" id="IPR016193">
    <property type="entry name" value="Cytidine_deaminase-like"/>
</dbReference>
<dbReference type="InterPro" id="IPR011607">
    <property type="entry name" value="MGS-like_dom"/>
</dbReference>
<dbReference type="InterPro" id="IPR036914">
    <property type="entry name" value="MGS-like_dom_sf"/>
</dbReference>
<dbReference type="InterPro" id="IPR002695">
    <property type="entry name" value="PurH-like"/>
</dbReference>
<dbReference type="NCBIfam" id="NF002049">
    <property type="entry name" value="PRK00881.1"/>
    <property type="match status" value="1"/>
</dbReference>
<dbReference type="NCBIfam" id="TIGR00355">
    <property type="entry name" value="purH"/>
    <property type="match status" value="1"/>
</dbReference>
<dbReference type="PANTHER" id="PTHR11692:SF0">
    <property type="entry name" value="BIFUNCTIONAL PURINE BIOSYNTHESIS PROTEIN ATIC"/>
    <property type="match status" value="1"/>
</dbReference>
<dbReference type="PANTHER" id="PTHR11692">
    <property type="entry name" value="BIFUNCTIONAL PURINE BIOSYNTHESIS PROTEIN PURH"/>
    <property type="match status" value="1"/>
</dbReference>
<dbReference type="Pfam" id="PF01808">
    <property type="entry name" value="AICARFT_IMPCHas"/>
    <property type="match status" value="1"/>
</dbReference>
<dbReference type="Pfam" id="PF02142">
    <property type="entry name" value="MGS"/>
    <property type="match status" value="1"/>
</dbReference>
<dbReference type="PIRSF" id="PIRSF000414">
    <property type="entry name" value="AICARFT_IMPCHas"/>
    <property type="match status" value="1"/>
</dbReference>
<dbReference type="SMART" id="SM00798">
    <property type="entry name" value="AICARFT_IMPCHas"/>
    <property type="match status" value="1"/>
</dbReference>
<dbReference type="SMART" id="SM00851">
    <property type="entry name" value="MGS"/>
    <property type="match status" value="1"/>
</dbReference>
<dbReference type="SUPFAM" id="SSF53927">
    <property type="entry name" value="Cytidine deaminase-like"/>
    <property type="match status" value="1"/>
</dbReference>
<dbReference type="SUPFAM" id="SSF52335">
    <property type="entry name" value="Methylglyoxal synthase-like"/>
    <property type="match status" value="1"/>
</dbReference>
<dbReference type="PROSITE" id="PS51855">
    <property type="entry name" value="MGS"/>
    <property type="match status" value="1"/>
</dbReference>
<keyword id="KW-0378">Hydrolase</keyword>
<keyword id="KW-0511">Multifunctional enzyme</keyword>
<keyword id="KW-0658">Purine biosynthesis</keyword>
<keyword id="KW-0808">Transferase</keyword>
<name>PUR9_BACC3</name>
<gene>
    <name evidence="1" type="primary">purH</name>
    <name type="ordered locus">BCA_0372</name>
</gene>
<organism>
    <name type="scientific">Bacillus cereus (strain 03BB102)</name>
    <dbReference type="NCBI Taxonomy" id="572264"/>
    <lineage>
        <taxon>Bacteria</taxon>
        <taxon>Bacillati</taxon>
        <taxon>Bacillota</taxon>
        <taxon>Bacilli</taxon>
        <taxon>Bacillales</taxon>
        <taxon>Bacillaceae</taxon>
        <taxon>Bacillus</taxon>
        <taxon>Bacillus cereus group</taxon>
    </lineage>
</organism>
<accession>C1EV67</accession>
<sequence>MKKRALVSVSDKTGVVEFVKGLLEQGIEVISTGGTKKLLEENGLQVIGISEVTGFPEIMDGRVKTLHPNIHGGLLAVRDNETHVAQMNELGMEPIDFVIVNLYPFKETIAKPDVTFADAIENIDIGGPTMIRSAAKNHKFVSVIVDPVDYDVVLAELKENGEVKEETKRKLAAKVFRHTAAYDALISNYLTEQMGEESPETLTVTFEKKQDLRYGENPHQKATFYKAPFTVTSSVAYAEQLHGKELSYNNINDADAALSIVKEFTEPAVVAVKHMNPCGVGVGTDIHEAYTRAYEADPVSIFGGIIAANREIDKATAEKLHEIFLEIIIAPSFSKEALEVLQSKKNLRLLTVNIEKATSASKKLTSVQGGLLVQEEDTLSLDESTISIPTKREPSEQEWKDLKLAWKVVKHVKSNAIVLAKDDMTIGVGAGQMNRVGSAKIAITQAGEKAQGSALASDAFFPMPDTVEEAAKAGITAIIQPGGSIRDEDSIKVADTYGIAMVFTGVRHFKH</sequence>
<protein>
    <recommendedName>
        <fullName evidence="1">Bifunctional purine biosynthesis protein PurH</fullName>
    </recommendedName>
    <domain>
        <recommendedName>
            <fullName evidence="1">Phosphoribosylaminoimidazolecarboxamide formyltransferase</fullName>
            <ecNumber evidence="1">2.1.2.3</ecNumber>
        </recommendedName>
        <alternativeName>
            <fullName evidence="1">AICAR transformylase</fullName>
        </alternativeName>
    </domain>
    <domain>
        <recommendedName>
            <fullName evidence="1">IMP cyclohydrolase</fullName>
            <ecNumber evidence="1">3.5.4.10</ecNumber>
        </recommendedName>
        <alternativeName>
            <fullName evidence="1">ATIC</fullName>
        </alternativeName>
        <alternativeName>
            <fullName evidence="1">IMP synthase</fullName>
        </alternativeName>
        <alternativeName>
            <fullName evidence="1">Inosinicase</fullName>
        </alternativeName>
    </domain>
</protein>
<proteinExistence type="inferred from homology"/>
<reference key="1">
    <citation type="submission" date="2009-02" db="EMBL/GenBank/DDBJ databases">
        <title>Genome sequence of Bacillus cereus 03BB102.</title>
        <authorList>
            <person name="Dodson R.J."/>
            <person name="Jackson P."/>
            <person name="Munk A.C."/>
            <person name="Brettin T."/>
            <person name="Bruce D."/>
            <person name="Detter C."/>
            <person name="Tapia R."/>
            <person name="Han C."/>
            <person name="Sutton G."/>
            <person name="Sims D."/>
        </authorList>
    </citation>
    <scope>NUCLEOTIDE SEQUENCE [LARGE SCALE GENOMIC DNA]</scope>
    <source>
        <strain>03BB102</strain>
    </source>
</reference>
<feature type="chain" id="PRO_1000122946" description="Bifunctional purine biosynthesis protein PurH">
    <location>
        <begin position="1"/>
        <end position="511"/>
    </location>
</feature>
<feature type="domain" description="MGS-like" evidence="2">
    <location>
        <begin position="1"/>
        <end position="145"/>
    </location>
</feature>
<comment type="catalytic activity">
    <reaction evidence="1">
        <text>(6R)-10-formyltetrahydrofolate + 5-amino-1-(5-phospho-beta-D-ribosyl)imidazole-4-carboxamide = 5-formamido-1-(5-phospho-D-ribosyl)imidazole-4-carboxamide + (6S)-5,6,7,8-tetrahydrofolate</text>
        <dbReference type="Rhea" id="RHEA:22192"/>
        <dbReference type="ChEBI" id="CHEBI:57453"/>
        <dbReference type="ChEBI" id="CHEBI:58467"/>
        <dbReference type="ChEBI" id="CHEBI:58475"/>
        <dbReference type="ChEBI" id="CHEBI:195366"/>
        <dbReference type="EC" id="2.1.2.3"/>
    </reaction>
</comment>
<comment type="catalytic activity">
    <reaction evidence="1">
        <text>IMP + H2O = 5-formamido-1-(5-phospho-D-ribosyl)imidazole-4-carboxamide</text>
        <dbReference type="Rhea" id="RHEA:18445"/>
        <dbReference type="ChEBI" id="CHEBI:15377"/>
        <dbReference type="ChEBI" id="CHEBI:58053"/>
        <dbReference type="ChEBI" id="CHEBI:58467"/>
        <dbReference type="EC" id="3.5.4.10"/>
    </reaction>
</comment>
<comment type="pathway">
    <text evidence="1">Purine metabolism; IMP biosynthesis via de novo pathway; 5-formamido-1-(5-phospho-D-ribosyl)imidazole-4-carboxamide from 5-amino-1-(5-phospho-D-ribosyl)imidazole-4-carboxamide (10-formyl THF route): step 1/1.</text>
</comment>
<comment type="pathway">
    <text evidence="1">Purine metabolism; IMP biosynthesis via de novo pathway; IMP from 5-formamido-1-(5-phospho-D-ribosyl)imidazole-4-carboxamide: step 1/1.</text>
</comment>
<comment type="domain">
    <text evidence="1">The IMP cyclohydrolase activity resides in the N-terminal region.</text>
</comment>
<comment type="similarity">
    <text evidence="1">Belongs to the PurH family.</text>
</comment>